<proteinExistence type="inferred from homology"/>
<feature type="chain" id="PRO_1000099689" description="3-phosphoshikimate 1-carboxyvinyltransferase">
    <location>
        <begin position="1"/>
        <end position="426"/>
    </location>
</feature>
<feature type="active site" description="Proton acceptor" evidence="1">
    <location>
        <position position="304"/>
    </location>
</feature>
<feature type="binding site" evidence="1">
    <location>
        <position position="21"/>
    </location>
    <ligand>
        <name>3-phosphoshikimate</name>
        <dbReference type="ChEBI" id="CHEBI:145989"/>
    </ligand>
</feature>
<feature type="binding site" evidence="1">
    <location>
        <position position="21"/>
    </location>
    <ligand>
        <name>phosphoenolpyruvate</name>
        <dbReference type="ChEBI" id="CHEBI:58702"/>
    </ligand>
</feature>
<feature type="binding site" evidence="1">
    <location>
        <position position="22"/>
    </location>
    <ligand>
        <name>3-phosphoshikimate</name>
        <dbReference type="ChEBI" id="CHEBI:145989"/>
    </ligand>
</feature>
<feature type="binding site" evidence="1">
    <location>
        <position position="26"/>
    </location>
    <ligand>
        <name>3-phosphoshikimate</name>
        <dbReference type="ChEBI" id="CHEBI:145989"/>
    </ligand>
</feature>
<feature type="binding site" evidence="1">
    <location>
        <position position="91"/>
    </location>
    <ligand>
        <name>phosphoenolpyruvate</name>
        <dbReference type="ChEBI" id="CHEBI:58702"/>
    </ligand>
</feature>
<feature type="binding site" evidence="1">
    <location>
        <position position="119"/>
    </location>
    <ligand>
        <name>phosphoenolpyruvate</name>
        <dbReference type="ChEBI" id="CHEBI:58702"/>
    </ligand>
</feature>
<feature type="binding site" evidence="1">
    <location>
        <position position="162"/>
    </location>
    <ligand>
        <name>3-phosphoshikimate</name>
        <dbReference type="ChEBI" id="CHEBI:145989"/>
    </ligand>
</feature>
<feature type="binding site" evidence="1">
    <location>
        <position position="163"/>
    </location>
    <ligand>
        <name>3-phosphoshikimate</name>
        <dbReference type="ChEBI" id="CHEBI:145989"/>
    </ligand>
</feature>
<feature type="binding site" evidence="1">
    <location>
        <position position="164"/>
    </location>
    <ligand>
        <name>3-phosphoshikimate</name>
        <dbReference type="ChEBI" id="CHEBI:145989"/>
    </ligand>
</feature>
<feature type="binding site" evidence="1">
    <location>
        <position position="164"/>
    </location>
    <ligand>
        <name>phosphoenolpyruvate</name>
        <dbReference type="ChEBI" id="CHEBI:58702"/>
    </ligand>
</feature>
<feature type="binding site" evidence="1">
    <location>
        <position position="190"/>
    </location>
    <ligand>
        <name>3-phosphoshikimate</name>
        <dbReference type="ChEBI" id="CHEBI:145989"/>
    </ligand>
</feature>
<feature type="binding site" evidence="1">
    <location>
        <position position="304"/>
    </location>
    <ligand>
        <name>3-phosphoshikimate</name>
        <dbReference type="ChEBI" id="CHEBI:145989"/>
    </ligand>
</feature>
<feature type="binding site" evidence="1">
    <location>
        <position position="331"/>
    </location>
    <ligand>
        <name>3-phosphoshikimate</name>
        <dbReference type="ChEBI" id="CHEBI:145989"/>
    </ligand>
</feature>
<feature type="binding site" evidence="1">
    <location>
        <position position="335"/>
    </location>
    <ligand>
        <name>phosphoenolpyruvate</name>
        <dbReference type="ChEBI" id="CHEBI:58702"/>
    </ligand>
</feature>
<feature type="binding site" evidence="1">
    <location>
        <position position="377"/>
    </location>
    <ligand>
        <name>phosphoenolpyruvate</name>
        <dbReference type="ChEBI" id="CHEBI:58702"/>
    </ligand>
</feature>
<feature type="binding site" evidence="1">
    <location>
        <position position="403"/>
    </location>
    <ligand>
        <name>phosphoenolpyruvate</name>
        <dbReference type="ChEBI" id="CHEBI:58702"/>
    </ligand>
</feature>
<keyword id="KW-0028">Amino-acid biosynthesis</keyword>
<keyword id="KW-0057">Aromatic amino acid biosynthesis</keyword>
<keyword id="KW-0963">Cytoplasm</keyword>
<keyword id="KW-1185">Reference proteome</keyword>
<keyword id="KW-0808">Transferase</keyword>
<accession>A5N6A9</accession>
<evidence type="ECO:0000255" key="1">
    <source>
        <dbReference type="HAMAP-Rule" id="MF_00210"/>
    </source>
</evidence>
<organism>
    <name type="scientific">Clostridium kluyveri (strain ATCC 8527 / DSM 555 / NBRC 12016 / NCIMB 10680 / K1)</name>
    <dbReference type="NCBI Taxonomy" id="431943"/>
    <lineage>
        <taxon>Bacteria</taxon>
        <taxon>Bacillati</taxon>
        <taxon>Bacillota</taxon>
        <taxon>Clostridia</taxon>
        <taxon>Eubacteriales</taxon>
        <taxon>Clostridiaceae</taxon>
        <taxon>Clostridium</taxon>
    </lineage>
</organism>
<name>AROA_CLOK5</name>
<comment type="function">
    <text evidence="1">Catalyzes the transfer of the enolpyruvyl moiety of phosphoenolpyruvate (PEP) to the 5-hydroxyl of shikimate-3-phosphate (S3P) to produce enolpyruvyl shikimate-3-phosphate and inorganic phosphate.</text>
</comment>
<comment type="catalytic activity">
    <reaction evidence="1">
        <text>3-phosphoshikimate + phosphoenolpyruvate = 5-O-(1-carboxyvinyl)-3-phosphoshikimate + phosphate</text>
        <dbReference type="Rhea" id="RHEA:21256"/>
        <dbReference type="ChEBI" id="CHEBI:43474"/>
        <dbReference type="ChEBI" id="CHEBI:57701"/>
        <dbReference type="ChEBI" id="CHEBI:58702"/>
        <dbReference type="ChEBI" id="CHEBI:145989"/>
        <dbReference type="EC" id="2.5.1.19"/>
    </reaction>
    <physiologicalReaction direction="left-to-right" evidence="1">
        <dbReference type="Rhea" id="RHEA:21257"/>
    </physiologicalReaction>
</comment>
<comment type="pathway">
    <text evidence="1">Metabolic intermediate biosynthesis; chorismate biosynthesis; chorismate from D-erythrose 4-phosphate and phosphoenolpyruvate: step 6/7.</text>
</comment>
<comment type="subunit">
    <text evidence="1">Monomer.</text>
</comment>
<comment type="subcellular location">
    <subcellularLocation>
        <location evidence="1">Cytoplasm</location>
    </subcellularLocation>
</comment>
<comment type="similarity">
    <text evidence="1">Belongs to the EPSP synthase family.</text>
</comment>
<protein>
    <recommendedName>
        <fullName evidence="1">3-phosphoshikimate 1-carboxyvinyltransferase</fullName>
        <ecNumber evidence="1">2.5.1.19</ecNumber>
    </recommendedName>
    <alternativeName>
        <fullName evidence="1">5-enolpyruvylshikimate-3-phosphate synthase</fullName>
        <shortName evidence="1">EPSP synthase</shortName>
        <shortName evidence="1">EPSPS</shortName>
    </alternativeName>
</protein>
<dbReference type="EC" id="2.5.1.19" evidence="1"/>
<dbReference type="EMBL" id="CP000673">
    <property type="protein sequence ID" value="EDK32840.1"/>
    <property type="molecule type" value="Genomic_DNA"/>
</dbReference>
<dbReference type="RefSeq" id="WP_011989355.1">
    <property type="nucleotide sequence ID" value="NC_009706.1"/>
</dbReference>
<dbReference type="SMR" id="A5N6A9"/>
<dbReference type="STRING" id="431943.CKL_0787"/>
<dbReference type="KEGG" id="ckl:CKL_0787"/>
<dbReference type="eggNOG" id="COG0128">
    <property type="taxonomic scope" value="Bacteria"/>
</dbReference>
<dbReference type="HOGENOM" id="CLU_024321_0_0_9"/>
<dbReference type="UniPathway" id="UPA00053">
    <property type="reaction ID" value="UER00089"/>
</dbReference>
<dbReference type="Proteomes" id="UP000002411">
    <property type="component" value="Chromosome"/>
</dbReference>
<dbReference type="GO" id="GO:0005737">
    <property type="term" value="C:cytoplasm"/>
    <property type="evidence" value="ECO:0007669"/>
    <property type="project" value="UniProtKB-SubCell"/>
</dbReference>
<dbReference type="GO" id="GO:0003866">
    <property type="term" value="F:3-phosphoshikimate 1-carboxyvinyltransferase activity"/>
    <property type="evidence" value="ECO:0007669"/>
    <property type="project" value="UniProtKB-UniRule"/>
</dbReference>
<dbReference type="GO" id="GO:0008652">
    <property type="term" value="P:amino acid biosynthetic process"/>
    <property type="evidence" value="ECO:0007669"/>
    <property type="project" value="UniProtKB-KW"/>
</dbReference>
<dbReference type="GO" id="GO:0009073">
    <property type="term" value="P:aromatic amino acid family biosynthetic process"/>
    <property type="evidence" value="ECO:0007669"/>
    <property type="project" value="UniProtKB-KW"/>
</dbReference>
<dbReference type="GO" id="GO:0009423">
    <property type="term" value="P:chorismate biosynthetic process"/>
    <property type="evidence" value="ECO:0007669"/>
    <property type="project" value="UniProtKB-UniRule"/>
</dbReference>
<dbReference type="CDD" id="cd01556">
    <property type="entry name" value="EPSP_synthase"/>
    <property type="match status" value="1"/>
</dbReference>
<dbReference type="Gene3D" id="3.65.10.10">
    <property type="entry name" value="Enolpyruvate transferase domain"/>
    <property type="match status" value="2"/>
</dbReference>
<dbReference type="HAMAP" id="MF_00210">
    <property type="entry name" value="EPSP_synth"/>
    <property type="match status" value="1"/>
</dbReference>
<dbReference type="InterPro" id="IPR001986">
    <property type="entry name" value="Enolpyruvate_Tfrase_dom"/>
</dbReference>
<dbReference type="InterPro" id="IPR036968">
    <property type="entry name" value="Enolpyruvate_Tfrase_sf"/>
</dbReference>
<dbReference type="InterPro" id="IPR006264">
    <property type="entry name" value="EPSP_synthase"/>
</dbReference>
<dbReference type="InterPro" id="IPR023193">
    <property type="entry name" value="EPSP_synthase_CS"/>
</dbReference>
<dbReference type="InterPro" id="IPR013792">
    <property type="entry name" value="RNA3'P_cycl/enolpyr_Trfase_a/b"/>
</dbReference>
<dbReference type="NCBIfam" id="TIGR01356">
    <property type="entry name" value="aroA"/>
    <property type="match status" value="1"/>
</dbReference>
<dbReference type="PANTHER" id="PTHR21090">
    <property type="entry name" value="AROM/DEHYDROQUINATE SYNTHASE"/>
    <property type="match status" value="1"/>
</dbReference>
<dbReference type="PANTHER" id="PTHR21090:SF5">
    <property type="entry name" value="PENTAFUNCTIONAL AROM POLYPEPTIDE"/>
    <property type="match status" value="1"/>
</dbReference>
<dbReference type="Pfam" id="PF00275">
    <property type="entry name" value="EPSP_synthase"/>
    <property type="match status" value="1"/>
</dbReference>
<dbReference type="PIRSF" id="PIRSF000505">
    <property type="entry name" value="EPSPS"/>
    <property type="match status" value="1"/>
</dbReference>
<dbReference type="SUPFAM" id="SSF55205">
    <property type="entry name" value="EPT/RTPC-like"/>
    <property type="match status" value="1"/>
</dbReference>
<dbReference type="PROSITE" id="PS00885">
    <property type="entry name" value="EPSP_SYNTHASE_2"/>
    <property type="match status" value="1"/>
</dbReference>
<gene>
    <name evidence="1" type="primary">aroA</name>
    <name type="ordered locus">CKL_0787</name>
</gene>
<sequence>MKYVSINPTKLEGQVKIPPSKSVCHRALICASLSSGVSNITNVDFSEDIEATCEALKSLGVIIEKGNNSLSIKGNSNLYVKKPNVHCFQSGSTLRFLIPLAATLGEEITFTGEGKLVERPLNVYYDIFKSQKIYYKTESGKLPLTINGKLKSGDYRVRGDVSSQFVTGLLFALPLLSGDSKIEITTELESKSYVDITIDMLGKFGVCVDGSSYREFIIKGNQTYKEVDCNIEGDFSQVAFWLVMGALGKGITCMGLDTDSLQGDRIIVHILKDMGVEIEEKENCIEVNPSKTTGVVIDVSQCPDLVPVLAALASVSHGTTEIINAARLRIKESDRLKAITSELNKIGAEVIEKEDSLIIHGKENLKGGNVTSWKDHRIAMALAAVSSKCTEPLVIEGAECVKKSYPGFWEDFRSLGGEIDEWSVGK</sequence>
<reference key="1">
    <citation type="journal article" date="2008" name="Proc. Natl. Acad. Sci. U.S.A.">
        <title>The genome of Clostridium kluyveri, a strict anaerobe with unique metabolic features.</title>
        <authorList>
            <person name="Seedorf H."/>
            <person name="Fricke W.F."/>
            <person name="Veith B."/>
            <person name="Brueggemann H."/>
            <person name="Liesegang H."/>
            <person name="Strittmatter A."/>
            <person name="Miethke M."/>
            <person name="Buckel W."/>
            <person name="Hinderberger J."/>
            <person name="Li F."/>
            <person name="Hagemeier C."/>
            <person name="Thauer R.K."/>
            <person name="Gottschalk G."/>
        </authorList>
    </citation>
    <scope>NUCLEOTIDE SEQUENCE [LARGE SCALE GENOMIC DNA]</scope>
    <source>
        <strain>ATCC 8527 / DSM 555 / NBRC 12016 / NCIMB 10680 / K1</strain>
    </source>
</reference>